<evidence type="ECO:0000255" key="1">
    <source>
        <dbReference type="HAMAP-Rule" id="MF_00818"/>
    </source>
</evidence>
<accession>Q9WZP8</accession>
<feature type="chain" id="PRO_0000163015" description="NADPH-dependent 7-cyano-7-deazaguanine reductase">
    <location>
        <begin position="1"/>
        <end position="137"/>
    </location>
</feature>
<feature type="active site" description="Thioimide intermediate" evidence="1">
    <location>
        <position position="45"/>
    </location>
</feature>
<feature type="active site" description="Proton donor" evidence="1">
    <location>
        <position position="52"/>
    </location>
</feature>
<feature type="binding site" evidence="1">
    <location>
        <begin position="68"/>
        <end position="70"/>
    </location>
    <ligand>
        <name>substrate</name>
    </ligand>
</feature>
<feature type="binding site" evidence="1">
    <location>
        <begin position="87"/>
        <end position="88"/>
    </location>
    <ligand>
        <name>substrate</name>
    </ligand>
</feature>
<keyword id="KW-0963">Cytoplasm</keyword>
<keyword id="KW-0521">NADP</keyword>
<keyword id="KW-0560">Oxidoreductase</keyword>
<keyword id="KW-0671">Queuosine biosynthesis</keyword>
<keyword id="KW-1185">Reference proteome</keyword>
<sequence length="137" mass="15675">MPKAEGRIFDFKGHDAIRTDFLEAIDFDGKDEYIKIETDEFSAVCPFSGLPDIGRVIIEYYPDGGKIVELKSLKYYFVSFRNVGIYQEEATKRIYEDLKNLLKTDRIRVTVIYNIRGGIKTTTQMGSLEGKKSGEVE</sequence>
<comment type="function">
    <text evidence="1">Catalyzes the NADPH-dependent reduction of 7-cyano-7-deazaguanine (preQ0) to 7-aminomethyl-7-deazaguanine (preQ1).</text>
</comment>
<comment type="catalytic activity">
    <reaction evidence="1">
        <text>7-aminomethyl-7-carbaguanine + 2 NADP(+) = 7-cyano-7-deazaguanine + 2 NADPH + 3 H(+)</text>
        <dbReference type="Rhea" id="RHEA:13409"/>
        <dbReference type="ChEBI" id="CHEBI:15378"/>
        <dbReference type="ChEBI" id="CHEBI:45075"/>
        <dbReference type="ChEBI" id="CHEBI:57783"/>
        <dbReference type="ChEBI" id="CHEBI:58349"/>
        <dbReference type="ChEBI" id="CHEBI:58703"/>
        <dbReference type="EC" id="1.7.1.13"/>
    </reaction>
</comment>
<comment type="pathway">
    <text evidence="1">tRNA modification; tRNA-queuosine biosynthesis.</text>
</comment>
<comment type="subcellular location">
    <subcellularLocation>
        <location evidence="1">Cytoplasm</location>
    </subcellularLocation>
</comment>
<comment type="similarity">
    <text evidence="1">Belongs to the GTP cyclohydrolase I family. QueF type 1 subfamily.</text>
</comment>
<dbReference type="EC" id="1.7.1.13" evidence="1"/>
<dbReference type="EMBL" id="AE000512">
    <property type="protein sequence ID" value="AAD35873.1"/>
    <property type="molecule type" value="Genomic_DNA"/>
</dbReference>
<dbReference type="PIR" id="H72333">
    <property type="entry name" value="H72333"/>
</dbReference>
<dbReference type="RefSeq" id="NP_228600.1">
    <property type="nucleotide sequence ID" value="NC_000853.1"/>
</dbReference>
<dbReference type="RefSeq" id="WP_004080885.1">
    <property type="nucleotide sequence ID" value="NZ_CP011107.1"/>
</dbReference>
<dbReference type="SMR" id="Q9WZP8"/>
<dbReference type="FunCoup" id="Q9WZP8">
    <property type="interactions" value="62"/>
</dbReference>
<dbReference type="STRING" id="243274.TM_0791"/>
<dbReference type="PaxDb" id="243274-THEMA_00695"/>
<dbReference type="EnsemblBacteria" id="AAD35873">
    <property type="protein sequence ID" value="AAD35873"/>
    <property type="gene ID" value="TM_0791"/>
</dbReference>
<dbReference type="KEGG" id="tma:TM0791"/>
<dbReference type="KEGG" id="tmi:THEMA_00695"/>
<dbReference type="KEGG" id="tmm:Tmari_0792"/>
<dbReference type="KEGG" id="tmw:THMA_0810"/>
<dbReference type="eggNOG" id="COG0780">
    <property type="taxonomic scope" value="Bacteria"/>
</dbReference>
<dbReference type="InParanoid" id="Q9WZP8"/>
<dbReference type="OrthoDB" id="9795077at2"/>
<dbReference type="UniPathway" id="UPA00392"/>
<dbReference type="Proteomes" id="UP000008183">
    <property type="component" value="Chromosome"/>
</dbReference>
<dbReference type="GO" id="GO:0005829">
    <property type="term" value="C:cytosol"/>
    <property type="evidence" value="ECO:0000318"/>
    <property type="project" value="GO_Central"/>
</dbReference>
<dbReference type="GO" id="GO:0033739">
    <property type="term" value="F:preQ1 synthase activity"/>
    <property type="evidence" value="ECO:0000318"/>
    <property type="project" value="GO_Central"/>
</dbReference>
<dbReference type="GO" id="GO:0008616">
    <property type="term" value="P:queuosine biosynthetic process"/>
    <property type="evidence" value="ECO:0000318"/>
    <property type="project" value="GO_Central"/>
</dbReference>
<dbReference type="GO" id="GO:0006400">
    <property type="term" value="P:tRNA modification"/>
    <property type="evidence" value="ECO:0007669"/>
    <property type="project" value="UniProtKB-UniRule"/>
</dbReference>
<dbReference type="Gene3D" id="3.30.1130.10">
    <property type="match status" value="1"/>
</dbReference>
<dbReference type="HAMAP" id="MF_00818">
    <property type="entry name" value="QueF_type1"/>
    <property type="match status" value="1"/>
</dbReference>
<dbReference type="InterPro" id="IPR043133">
    <property type="entry name" value="GTP-CH-I_C/QueF"/>
</dbReference>
<dbReference type="InterPro" id="IPR050084">
    <property type="entry name" value="NADPH_dep_7-cyano-7-deazaG_red"/>
</dbReference>
<dbReference type="InterPro" id="IPR029500">
    <property type="entry name" value="QueF"/>
</dbReference>
<dbReference type="InterPro" id="IPR016856">
    <property type="entry name" value="QueF_type1"/>
</dbReference>
<dbReference type="NCBIfam" id="TIGR03139">
    <property type="entry name" value="QueF-II"/>
    <property type="match status" value="1"/>
</dbReference>
<dbReference type="PANTHER" id="PTHR34354">
    <property type="entry name" value="NADPH-DEPENDENT 7-CYANO-7-DEAZAGUANINE REDUCTASE"/>
    <property type="match status" value="1"/>
</dbReference>
<dbReference type="PANTHER" id="PTHR34354:SF1">
    <property type="entry name" value="NADPH-DEPENDENT 7-CYANO-7-DEAZAGUANINE REDUCTASE"/>
    <property type="match status" value="1"/>
</dbReference>
<dbReference type="Pfam" id="PF14489">
    <property type="entry name" value="QueF"/>
    <property type="match status" value="1"/>
</dbReference>
<dbReference type="PIRSF" id="PIRSF027377">
    <property type="entry name" value="Nitrile_oxidored_QueF"/>
    <property type="match status" value="1"/>
</dbReference>
<dbReference type="SUPFAM" id="SSF55620">
    <property type="entry name" value="Tetrahydrobiopterin biosynthesis enzymes-like"/>
    <property type="match status" value="1"/>
</dbReference>
<gene>
    <name evidence="1" type="primary">queF</name>
    <name type="ordered locus">TM_0791</name>
</gene>
<name>QUEF_THEMA</name>
<proteinExistence type="inferred from homology"/>
<protein>
    <recommendedName>
        <fullName evidence="1">NADPH-dependent 7-cyano-7-deazaguanine reductase</fullName>
        <ecNumber evidence="1">1.7.1.13</ecNumber>
    </recommendedName>
    <alternativeName>
        <fullName evidence="1">7-cyano-7-carbaguanine reductase</fullName>
    </alternativeName>
    <alternativeName>
        <fullName evidence="1">NADPH-dependent nitrile oxidoreductase</fullName>
    </alternativeName>
    <alternativeName>
        <fullName evidence="1">PreQ(0) reductase</fullName>
    </alternativeName>
</protein>
<reference key="1">
    <citation type="journal article" date="1999" name="Nature">
        <title>Evidence for lateral gene transfer between Archaea and Bacteria from genome sequence of Thermotoga maritima.</title>
        <authorList>
            <person name="Nelson K.E."/>
            <person name="Clayton R.A."/>
            <person name="Gill S.R."/>
            <person name="Gwinn M.L."/>
            <person name="Dodson R.J."/>
            <person name="Haft D.H."/>
            <person name="Hickey E.K."/>
            <person name="Peterson J.D."/>
            <person name="Nelson W.C."/>
            <person name="Ketchum K.A."/>
            <person name="McDonald L.A."/>
            <person name="Utterback T.R."/>
            <person name="Malek J.A."/>
            <person name="Linher K.D."/>
            <person name="Garrett M.M."/>
            <person name="Stewart A.M."/>
            <person name="Cotton M.D."/>
            <person name="Pratt M.S."/>
            <person name="Phillips C.A."/>
            <person name="Richardson D.L."/>
            <person name="Heidelberg J.F."/>
            <person name="Sutton G.G."/>
            <person name="Fleischmann R.D."/>
            <person name="Eisen J.A."/>
            <person name="White O."/>
            <person name="Salzberg S.L."/>
            <person name="Smith H.O."/>
            <person name="Venter J.C."/>
            <person name="Fraser C.M."/>
        </authorList>
    </citation>
    <scope>NUCLEOTIDE SEQUENCE [LARGE SCALE GENOMIC DNA]</scope>
    <source>
        <strain>ATCC 43589 / DSM 3109 / JCM 10099 / NBRC 100826 / MSB8</strain>
    </source>
</reference>
<organism>
    <name type="scientific">Thermotoga maritima (strain ATCC 43589 / DSM 3109 / JCM 10099 / NBRC 100826 / MSB8)</name>
    <dbReference type="NCBI Taxonomy" id="243274"/>
    <lineage>
        <taxon>Bacteria</taxon>
        <taxon>Thermotogati</taxon>
        <taxon>Thermotogota</taxon>
        <taxon>Thermotogae</taxon>
        <taxon>Thermotogales</taxon>
        <taxon>Thermotogaceae</taxon>
        <taxon>Thermotoga</taxon>
    </lineage>
</organism>